<proteinExistence type="evidence at transcript level"/>
<feature type="chain" id="PRO_0000079489" description="Beta-catenin-like protein 1">
    <location>
        <begin position="1"/>
        <end position="563"/>
    </location>
</feature>
<feature type="repeat" description="HEAT 1">
    <location>
        <begin position="79"/>
        <end position="129"/>
    </location>
</feature>
<feature type="repeat" description="HEAT 2">
    <location>
        <begin position="134"/>
        <end position="176"/>
    </location>
</feature>
<feature type="repeat" description="ARM 1">
    <location>
        <begin position="178"/>
        <end position="228"/>
    </location>
</feature>
<feature type="repeat" description="ARM 2">
    <location>
        <begin position="229"/>
        <end position="273"/>
    </location>
</feature>
<feature type="repeat" description="ARM 3">
    <location>
        <begin position="274"/>
        <end position="323"/>
    </location>
</feature>
<feature type="repeat" description="ARM 4">
    <location>
        <begin position="325"/>
        <end position="363"/>
    </location>
</feature>
<feature type="repeat" description="ARM 5">
    <location>
        <begin position="364"/>
        <end position="417"/>
    </location>
</feature>
<feature type="region of interest" description="Disordered" evidence="3">
    <location>
        <begin position="1"/>
        <end position="49"/>
    </location>
</feature>
<feature type="coiled-coil region" evidence="1">
    <location>
        <begin position="476"/>
        <end position="540"/>
    </location>
</feature>
<feature type="short sequence motif" description="Nuclear localization signal" evidence="1">
    <location>
        <begin position="16"/>
        <end position="33"/>
    </location>
</feature>
<feature type="short sequence motif" description="Nuclear export signal (NES)" evidence="1">
    <location>
        <begin position="130"/>
        <end position="140"/>
    </location>
</feature>
<feature type="compositionally biased region" description="Basic and acidic residues" evidence="3">
    <location>
        <begin position="34"/>
        <end position="45"/>
    </location>
</feature>
<feature type="modified residue" description="N-acetylmethionine" evidence="2">
    <location>
        <position position="1"/>
    </location>
</feature>
<feature type="modified residue" description="N6-acetyllysine" evidence="2">
    <location>
        <position position="91"/>
    </location>
</feature>
<feature type="modified residue" description="Phosphoserine" evidence="2">
    <location>
        <position position="389"/>
    </location>
</feature>
<feature type="modified residue" description="Phosphoserine" evidence="2">
    <location>
        <position position="545"/>
    </location>
</feature>
<protein>
    <recommendedName>
        <fullName>Beta-catenin-like protein 1</fullName>
    </recommendedName>
    <alternativeName>
        <fullName>Nuclear-associated protein</fullName>
        <shortName>NAP</shortName>
    </alternativeName>
    <alternativeName>
        <fullName>p14</fullName>
    </alternativeName>
</protein>
<accession>O62703</accession>
<accession>Q2KI34</accession>
<keyword id="KW-0007">Acetylation</keyword>
<keyword id="KW-1064">Adaptive immunity</keyword>
<keyword id="KW-0175">Coiled coil</keyword>
<keyword id="KW-0391">Immunity</keyword>
<keyword id="KW-0507">mRNA processing</keyword>
<keyword id="KW-0508">mRNA splicing</keyword>
<keyword id="KW-0539">Nucleus</keyword>
<keyword id="KW-0597">Phosphoprotein</keyword>
<keyword id="KW-1185">Reference proteome</keyword>
<keyword id="KW-0677">Repeat</keyword>
<keyword id="KW-0747">Spliceosome</keyword>
<organism>
    <name type="scientific">Bos taurus</name>
    <name type="common">Bovine</name>
    <dbReference type="NCBI Taxonomy" id="9913"/>
    <lineage>
        <taxon>Eukaryota</taxon>
        <taxon>Metazoa</taxon>
        <taxon>Chordata</taxon>
        <taxon>Craniata</taxon>
        <taxon>Vertebrata</taxon>
        <taxon>Euteleostomi</taxon>
        <taxon>Mammalia</taxon>
        <taxon>Eutheria</taxon>
        <taxon>Laurasiatheria</taxon>
        <taxon>Artiodactyla</taxon>
        <taxon>Ruminantia</taxon>
        <taxon>Pecora</taxon>
        <taxon>Bovidae</taxon>
        <taxon>Bovinae</taxon>
        <taxon>Bos</taxon>
    </lineage>
</organism>
<dbReference type="EMBL" id="BC112785">
    <property type="protein sequence ID" value="AAI12786.1"/>
    <property type="molecule type" value="mRNA"/>
</dbReference>
<dbReference type="EMBL" id="AF037349">
    <property type="protein sequence ID" value="AAC17837.1"/>
    <property type="status" value="ALT_INIT"/>
    <property type="molecule type" value="mRNA"/>
</dbReference>
<dbReference type="RefSeq" id="NP_777062.2">
    <property type="nucleotide sequence ID" value="NM_174637.4"/>
</dbReference>
<dbReference type="SMR" id="O62703"/>
<dbReference type="FunCoup" id="O62703">
    <property type="interactions" value="4423"/>
</dbReference>
<dbReference type="STRING" id="9913.ENSBTAP00000010077"/>
<dbReference type="PaxDb" id="9913-ENSBTAP00000010077"/>
<dbReference type="GeneID" id="282421"/>
<dbReference type="KEGG" id="bta:282421"/>
<dbReference type="CTD" id="56259"/>
<dbReference type="eggNOG" id="KOG2734">
    <property type="taxonomic scope" value="Eukaryota"/>
</dbReference>
<dbReference type="InParanoid" id="O62703"/>
<dbReference type="OrthoDB" id="1898821at2759"/>
<dbReference type="Proteomes" id="UP000009136">
    <property type="component" value="Unplaced"/>
</dbReference>
<dbReference type="GO" id="GO:0005634">
    <property type="term" value="C:nucleus"/>
    <property type="evidence" value="ECO:0000250"/>
    <property type="project" value="UniProtKB"/>
</dbReference>
<dbReference type="GO" id="GO:0000974">
    <property type="term" value="C:Prp19 complex"/>
    <property type="evidence" value="ECO:0000250"/>
    <property type="project" value="UniProtKB"/>
</dbReference>
<dbReference type="GO" id="GO:0005681">
    <property type="term" value="C:spliceosomal complex"/>
    <property type="evidence" value="ECO:0000250"/>
    <property type="project" value="UniProtKB"/>
</dbReference>
<dbReference type="GO" id="GO:0002250">
    <property type="term" value="P:adaptive immune response"/>
    <property type="evidence" value="ECO:0007669"/>
    <property type="project" value="UniProtKB-KW"/>
</dbReference>
<dbReference type="GO" id="GO:0006397">
    <property type="term" value="P:mRNA processing"/>
    <property type="evidence" value="ECO:0007669"/>
    <property type="project" value="UniProtKB-KW"/>
</dbReference>
<dbReference type="GO" id="GO:0008380">
    <property type="term" value="P:RNA splicing"/>
    <property type="evidence" value="ECO:0007669"/>
    <property type="project" value="UniProtKB-KW"/>
</dbReference>
<dbReference type="FunFam" id="1.25.10.10:FF:001136">
    <property type="entry name" value="Beta-catenin-like protein 1"/>
    <property type="match status" value="1"/>
</dbReference>
<dbReference type="Gene3D" id="1.25.10.10">
    <property type="entry name" value="Leucine-rich Repeat Variant"/>
    <property type="match status" value="1"/>
</dbReference>
<dbReference type="InterPro" id="IPR011989">
    <property type="entry name" value="ARM-like"/>
</dbReference>
<dbReference type="InterPro" id="IPR016024">
    <property type="entry name" value="ARM-type_fold"/>
</dbReference>
<dbReference type="InterPro" id="IPR039678">
    <property type="entry name" value="CTNNBL1"/>
</dbReference>
<dbReference type="InterPro" id="IPR013180">
    <property type="entry name" value="CTNNBL1_N"/>
</dbReference>
<dbReference type="PANTHER" id="PTHR14978:SF0">
    <property type="entry name" value="BETA-CATENIN-LIKE PROTEIN 1"/>
    <property type="match status" value="1"/>
</dbReference>
<dbReference type="PANTHER" id="PTHR14978">
    <property type="entry name" value="BETA-CATENIN-LIKE PROTEIN 1 NUCLEAR ASSOCIATED PROTEIN"/>
    <property type="match status" value="1"/>
</dbReference>
<dbReference type="Pfam" id="PF08216">
    <property type="entry name" value="CTNNBL"/>
    <property type="match status" value="1"/>
</dbReference>
<dbReference type="SMART" id="SM01156">
    <property type="entry name" value="DUF1716"/>
    <property type="match status" value="1"/>
</dbReference>
<dbReference type="SUPFAM" id="SSF48371">
    <property type="entry name" value="ARM repeat"/>
    <property type="match status" value="1"/>
</dbReference>
<comment type="function">
    <text evidence="2">Component of the PRP19-CDC5L complex that forms an integral part of the spliceosome and is required for activating pre-mRNA splicing. Participates in AID/AICDA-mediated somatic hypermutation (SHM) and class-switch recombination (CSR), 2 processes resulting in the production of high-affinity, mutated isotype-switched antibodies.</text>
</comment>
<comment type="subunit">
    <text evidence="1">Component of the PRP19-CDC5L splicing complex composed of a core complex comprising a homotetramer of PRPF19, CDC5L, PLRG1 and BCAS2, and at least three less stably associated proteins CTNNBL1, CWC15 and HSPA8. Interacts directly with CWC15 and CDC5L in the complex. Interacts with AICDA; the interaction is important for the antibody diversification activity of AICDA. Interacts with PRPF31 (via its NLS). Interacts (via its N-terminal NLS) with KPNA1 and KPNA2 (By similarity).</text>
</comment>
<comment type="subcellular location">
    <subcellularLocation>
        <location evidence="1">Nucleus</location>
    </subcellularLocation>
</comment>
<comment type="domain">
    <text evidence="1">The surface residues of the concave side of the superhelical ARM repeat region contribute to, but are not essential for NLS binding.</text>
</comment>
<comment type="sequence caution" evidence="4">
    <conflict type="erroneous initiation">
        <sequence resource="EMBL-CDS" id="AAC17837"/>
    </conflict>
    <text>Truncated N-terminus.</text>
</comment>
<name>CTBL1_BOVIN</name>
<evidence type="ECO:0000250" key="1"/>
<evidence type="ECO:0000250" key="2">
    <source>
        <dbReference type="UniProtKB" id="Q8WYA6"/>
    </source>
</evidence>
<evidence type="ECO:0000256" key="3">
    <source>
        <dbReference type="SAM" id="MobiDB-lite"/>
    </source>
</evidence>
<evidence type="ECO:0000305" key="4"/>
<sequence>MDVGELLSYQPNRGTKRPRDDEEEELKMRRRQAGTRERGRYREEEMTVVEEADDDKKRLLQIIDREGEEEEEEEEPLDESSVKKMILTFEKRSYKNQELRIKFPDNPEKFMESELDLNDIIQEMHVVATMPDLYHLLVELNAVQSLLGLLGHDNTDVSIAVVDLLQELTDIDTLHESEEGAEVLTDALVDGQVVALLVQDLERLDESVKEEADGVHNTLAIVENMAEFRPEMCTEAAQQGLLQWLLKRLKAKMPFDANKLYCSEVLAILLQDNDENRELLGELDGIDVLLQQLSVFKRHNPSTAEEQEMMENLFDSLCSCLMLSSNRERFLKGEGLQLMNLMLREKKISRSSALKVLDHAMIGPEGTDNCHKFVDILGLRTIFPLFMKSPRKIKKVGTTEKEHEEHVCSILASLLRNLRGQQRTRLLNKFTENDSEKVDRLMELHFKYLDAVQVADKKIEGEKHDMVRRGEIIDNDIEDEFYLRRLDAGLFVLQHICYIMAEICNANVPQIRQRVHQILNMRGSSIKIVRHIIKEYAENIGDGRSPEFRESEQKRILALLENF</sequence>
<reference key="1">
    <citation type="submission" date="2006-01" db="EMBL/GenBank/DDBJ databases">
        <authorList>
            <consortium name="NIH - Mammalian Gene Collection (MGC) project"/>
        </authorList>
    </citation>
    <scope>NUCLEOTIDE SEQUENCE [LARGE SCALE MRNA]</scope>
    <source>
        <strain>Hereford</strain>
        <tissue>Hypothalamus</tissue>
    </source>
</reference>
<reference key="2">
    <citation type="submission" date="1997-12" db="EMBL/GenBank/DDBJ databases">
        <authorList>
            <person name="Onderak L.S."/>
            <person name="Kollar J."/>
            <person name="Huynh T."/>
            <person name="Hering T.M."/>
        </authorList>
    </citation>
    <scope>NUCLEOTIDE SEQUENCE [MRNA] OF 425-563</scope>
    <source>
        <tissue>Articular cartilage</tissue>
    </source>
</reference>
<gene>
    <name type="primary">CTNNBL1</name>
</gene>